<gene>
    <name evidence="1" type="primary">murD</name>
    <name type="ordered locus">STH1031</name>
</gene>
<protein>
    <recommendedName>
        <fullName evidence="1">UDP-N-acetylmuramoylalanine--D-glutamate ligase</fullName>
        <ecNumber evidence="1">6.3.2.9</ecNumber>
    </recommendedName>
    <alternativeName>
        <fullName evidence="1">D-glutamic acid-adding enzyme</fullName>
    </alternativeName>
    <alternativeName>
        <fullName evidence="1">UDP-N-acetylmuramoyl-L-alanyl-D-glutamate synthetase</fullName>
    </alternativeName>
</protein>
<evidence type="ECO:0000255" key="1">
    <source>
        <dbReference type="HAMAP-Rule" id="MF_00639"/>
    </source>
</evidence>
<proteinExistence type="inferred from homology"/>
<reference key="1">
    <citation type="journal article" date="2004" name="Nucleic Acids Res.">
        <title>Genome sequence of Symbiobacterium thermophilum, an uncultivable bacterium that depends on microbial commensalism.</title>
        <authorList>
            <person name="Ueda K."/>
            <person name="Yamashita A."/>
            <person name="Ishikawa J."/>
            <person name="Shimada M."/>
            <person name="Watsuji T."/>
            <person name="Morimura K."/>
            <person name="Ikeda H."/>
            <person name="Hattori M."/>
            <person name="Beppu T."/>
        </authorList>
    </citation>
    <scope>NUCLEOTIDE SEQUENCE [LARGE SCALE GENOMIC DNA]</scope>
    <source>
        <strain>DSM 24528 / JCM 14929 / IAM 14863 / T</strain>
    </source>
</reference>
<dbReference type="EC" id="6.3.2.9" evidence="1"/>
<dbReference type="EMBL" id="AP006840">
    <property type="protein sequence ID" value="BAD40016.1"/>
    <property type="molecule type" value="Genomic_DNA"/>
</dbReference>
<dbReference type="SMR" id="Q67QM7"/>
<dbReference type="STRING" id="292459.STH1031"/>
<dbReference type="KEGG" id="sth:STH1031"/>
<dbReference type="eggNOG" id="COG0771">
    <property type="taxonomic scope" value="Bacteria"/>
</dbReference>
<dbReference type="HOGENOM" id="CLU_032540_0_1_9"/>
<dbReference type="OrthoDB" id="9809796at2"/>
<dbReference type="UniPathway" id="UPA00219"/>
<dbReference type="Proteomes" id="UP000000417">
    <property type="component" value="Chromosome"/>
</dbReference>
<dbReference type="GO" id="GO:0005737">
    <property type="term" value="C:cytoplasm"/>
    <property type="evidence" value="ECO:0007669"/>
    <property type="project" value="UniProtKB-SubCell"/>
</dbReference>
<dbReference type="GO" id="GO:0005524">
    <property type="term" value="F:ATP binding"/>
    <property type="evidence" value="ECO:0007669"/>
    <property type="project" value="UniProtKB-UniRule"/>
</dbReference>
<dbReference type="GO" id="GO:0008764">
    <property type="term" value="F:UDP-N-acetylmuramoylalanine-D-glutamate ligase activity"/>
    <property type="evidence" value="ECO:0007669"/>
    <property type="project" value="UniProtKB-UniRule"/>
</dbReference>
<dbReference type="GO" id="GO:0051301">
    <property type="term" value="P:cell division"/>
    <property type="evidence" value="ECO:0007669"/>
    <property type="project" value="UniProtKB-KW"/>
</dbReference>
<dbReference type="GO" id="GO:0071555">
    <property type="term" value="P:cell wall organization"/>
    <property type="evidence" value="ECO:0007669"/>
    <property type="project" value="UniProtKB-KW"/>
</dbReference>
<dbReference type="GO" id="GO:0009252">
    <property type="term" value="P:peptidoglycan biosynthetic process"/>
    <property type="evidence" value="ECO:0007669"/>
    <property type="project" value="UniProtKB-UniRule"/>
</dbReference>
<dbReference type="GO" id="GO:0008360">
    <property type="term" value="P:regulation of cell shape"/>
    <property type="evidence" value="ECO:0007669"/>
    <property type="project" value="UniProtKB-KW"/>
</dbReference>
<dbReference type="Gene3D" id="3.90.190.20">
    <property type="entry name" value="Mur ligase, C-terminal domain"/>
    <property type="match status" value="1"/>
</dbReference>
<dbReference type="Gene3D" id="3.40.1190.10">
    <property type="entry name" value="Mur-like, catalytic domain"/>
    <property type="match status" value="1"/>
</dbReference>
<dbReference type="Gene3D" id="3.40.50.720">
    <property type="entry name" value="NAD(P)-binding Rossmann-like Domain"/>
    <property type="match status" value="1"/>
</dbReference>
<dbReference type="HAMAP" id="MF_00639">
    <property type="entry name" value="MurD"/>
    <property type="match status" value="1"/>
</dbReference>
<dbReference type="InterPro" id="IPR036565">
    <property type="entry name" value="Mur-like_cat_sf"/>
</dbReference>
<dbReference type="InterPro" id="IPR004101">
    <property type="entry name" value="Mur_ligase_C"/>
</dbReference>
<dbReference type="InterPro" id="IPR036615">
    <property type="entry name" value="Mur_ligase_C_dom_sf"/>
</dbReference>
<dbReference type="InterPro" id="IPR013221">
    <property type="entry name" value="Mur_ligase_cen"/>
</dbReference>
<dbReference type="InterPro" id="IPR005762">
    <property type="entry name" value="MurD"/>
</dbReference>
<dbReference type="NCBIfam" id="TIGR01087">
    <property type="entry name" value="murD"/>
    <property type="match status" value="1"/>
</dbReference>
<dbReference type="PANTHER" id="PTHR43692">
    <property type="entry name" value="UDP-N-ACETYLMURAMOYLALANINE--D-GLUTAMATE LIGASE"/>
    <property type="match status" value="1"/>
</dbReference>
<dbReference type="PANTHER" id="PTHR43692:SF1">
    <property type="entry name" value="UDP-N-ACETYLMURAMOYLALANINE--D-GLUTAMATE LIGASE"/>
    <property type="match status" value="1"/>
</dbReference>
<dbReference type="Pfam" id="PF02875">
    <property type="entry name" value="Mur_ligase_C"/>
    <property type="match status" value="1"/>
</dbReference>
<dbReference type="Pfam" id="PF08245">
    <property type="entry name" value="Mur_ligase_M"/>
    <property type="match status" value="1"/>
</dbReference>
<dbReference type="Pfam" id="PF21799">
    <property type="entry name" value="MurD-like_N"/>
    <property type="match status" value="1"/>
</dbReference>
<dbReference type="SUPFAM" id="SSF51984">
    <property type="entry name" value="MurCD N-terminal domain"/>
    <property type="match status" value="1"/>
</dbReference>
<dbReference type="SUPFAM" id="SSF53623">
    <property type="entry name" value="MurD-like peptide ligases, catalytic domain"/>
    <property type="match status" value="1"/>
</dbReference>
<dbReference type="SUPFAM" id="SSF53244">
    <property type="entry name" value="MurD-like peptide ligases, peptide-binding domain"/>
    <property type="match status" value="1"/>
</dbReference>
<feature type="chain" id="PRO_0000109107" description="UDP-N-acetylmuramoylalanine--D-glutamate ligase">
    <location>
        <begin position="1"/>
        <end position="455"/>
    </location>
</feature>
<feature type="binding site" evidence="1">
    <location>
        <begin position="117"/>
        <end position="123"/>
    </location>
    <ligand>
        <name>ATP</name>
        <dbReference type="ChEBI" id="CHEBI:30616"/>
    </ligand>
</feature>
<accession>Q67QM7</accession>
<sequence>MAGVKLQERAAVVGIGISNMALIRYLVARGVRVTACDRTSAEKLGERAAELARLGVPLVAGEGYLEPLADHDLIFLTPGMPKHLPEIEAARRRGAAISGEIGLVLDLCRAPVIGVTGSAGKTTTTTLIGEILRAAGRETYVGGNIGKPLIEQVEAIPSEAVVVLELSSFQLQLVHRSPHIAVVTNVSPNHLDVHATMEEYVEAKKAIFRRQSPADWLVLNADDPTVRAFAAEARSRVVLFSRRADPGGRDAAFVREDRVIWRRGGRETPILFLDEIRLPGLHNQENVLAAVAACFLAGAPLSAVREVVTQFTGVEHRIEPVRVLDGVKWYNDSKATSPAEAVAALTTLPAPIVLIAGGSDKGIPFDPIAPLVAEKVKTLILMGPTAPKIEEAVRRGGYAGPIRRAADMAEAVALAREAAAPGDTVLLSPACASFDAYRNFEERGRHFKSLVEALS</sequence>
<comment type="function">
    <text evidence="1">Cell wall formation. Catalyzes the addition of glutamate to the nucleotide precursor UDP-N-acetylmuramoyl-L-alanine (UMA).</text>
</comment>
<comment type="catalytic activity">
    <reaction evidence="1">
        <text>UDP-N-acetyl-alpha-D-muramoyl-L-alanine + D-glutamate + ATP = UDP-N-acetyl-alpha-D-muramoyl-L-alanyl-D-glutamate + ADP + phosphate + H(+)</text>
        <dbReference type="Rhea" id="RHEA:16429"/>
        <dbReference type="ChEBI" id="CHEBI:15378"/>
        <dbReference type="ChEBI" id="CHEBI:29986"/>
        <dbReference type="ChEBI" id="CHEBI:30616"/>
        <dbReference type="ChEBI" id="CHEBI:43474"/>
        <dbReference type="ChEBI" id="CHEBI:83898"/>
        <dbReference type="ChEBI" id="CHEBI:83900"/>
        <dbReference type="ChEBI" id="CHEBI:456216"/>
        <dbReference type="EC" id="6.3.2.9"/>
    </reaction>
</comment>
<comment type="pathway">
    <text evidence="1">Cell wall biogenesis; peptidoglycan biosynthesis.</text>
</comment>
<comment type="subcellular location">
    <subcellularLocation>
        <location evidence="1">Cytoplasm</location>
    </subcellularLocation>
</comment>
<comment type="similarity">
    <text evidence="1">Belongs to the MurCDEF family.</text>
</comment>
<name>MURD_SYMTH</name>
<organism>
    <name type="scientific">Symbiobacterium thermophilum (strain DSM 24528 / JCM 14929 / IAM 14863 / T)</name>
    <dbReference type="NCBI Taxonomy" id="292459"/>
    <lineage>
        <taxon>Bacteria</taxon>
        <taxon>Bacillati</taxon>
        <taxon>Bacillota</taxon>
        <taxon>Clostridia</taxon>
        <taxon>Eubacteriales</taxon>
        <taxon>Symbiobacteriaceae</taxon>
        <taxon>Symbiobacterium</taxon>
    </lineage>
</organism>
<keyword id="KW-0067">ATP-binding</keyword>
<keyword id="KW-0131">Cell cycle</keyword>
<keyword id="KW-0132">Cell division</keyword>
<keyword id="KW-0133">Cell shape</keyword>
<keyword id="KW-0961">Cell wall biogenesis/degradation</keyword>
<keyword id="KW-0963">Cytoplasm</keyword>
<keyword id="KW-0436">Ligase</keyword>
<keyword id="KW-0547">Nucleotide-binding</keyword>
<keyword id="KW-0573">Peptidoglycan synthesis</keyword>
<keyword id="KW-1185">Reference proteome</keyword>